<accession>A1VY31</accession>
<gene>
    <name evidence="1" type="primary">pth</name>
    <name type="ordered locus">CJJ81176_0334</name>
</gene>
<sequence length="181" mass="19951">MILVVGLGNIGVEYENTRHNVGFMLIDLLLKESNFTNLTNSKFKGELFKIGSSLLLLKPSTYMNNSGLSVKAVNDFYKCERMIVIHDDIDINLGALRFKKGGSSGGHNGLKSIDTLCGNDYERVRIGVGKGENVISHVLGKFKSEEEITLSKVLEHTKKALLELIENDDLSAISSKYSLKA</sequence>
<evidence type="ECO:0000255" key="1">
    <source>
        <dbReference type="HAMAP-Rule" id="MF_00083"/>
    </source>
</evidence>
<proteinExistence type="inferred from homology"/>
<name>PTH_CAMJJ</name>
<dbReference type="EC" id="3.1.1.29" evidence="1"/>
<dbReference type="EMBL" id="CP000538">
    <property type="protein sequence ID" value="EAQ73144.1"/>
    <property type="molecule type" value="Genomic_DNA"/>
</dbReference>
<dbReference type="RefSeq" id="WP_002857525.1">
    <property type="nucleotide sequence ID" value="NC_008787.1"/>
</dbReference>
<dbReference type="SMR" id="A1VY31"/>
<dbReference type="KEGG" id="cjj:CJJ81176_0334"/>
<dbReference type="eggNOG" id="COG0193">
    <property type="taxonomic scope" value="Bacteria"/>
</dbReference>
<dbReference type="HOGENOM" id="CLU_062456_4_1_7"/>
<dbReference type="Proteomes" id="UP000000646">
    <property type="component" value="Chromosome"/>
</dbReference>
<dbReference type="GO" id="GO:0005737">
    <property type="term" value="C:cytoplasm"/>
    <property type="evidence" value="ECO:0007669"/>
    <property type="project" value="UniProtKB-SubCell"/>
</dbReference>
<dbReference type="GO" id="GO:0004045">
    <property type="term" value="F:peptidyl-tRNA hydrolase activity"/>
    <property type="evidence" value="ECO:0007669"/>
    <property type="project" value="UniProtKB-UniRule"/>
</dbReference>
<dbReference type="GO" id="GO:0000049">
    <property type="term" value="F:tRNA binding"/>
    <property type="evidence" value="ECO:0007669"/>
    <property type="project" value="UniProtKB-UniRule"/>
</dbReference>
<dbReference type="GO" id="GO:0006515">
    <property type="term" value="P:protein quality control for misfolded or incompletely synthesized proteins"/>
    <property type="evidence" value="ECO:0007669"/>
    <property type="project" value="UniProtKB-UniRule"/>
</dbReference>
<dbReference type="GO" id="GO:0072344">
    <property type="term" value="P:rescue of stalled ribosome"/>
    <property type="evidence" value="ECO:0007669"/>
    <property type="project" value="UniProtKB-UniRule"/>
</dbReference>
<dbReference type="CDD" id="cd00462">
    <property type="entry name" value="PTH"/>
    <property type="match status" value="1"/>
</dbReference>
<dbReference type="FunFam" id="3.40.50.1470:FF:000001">
    <property type="entry name" value="Peptidyl-tRNA hydrolase"/>
    <property type="match status" value="1"/>
</dbReference>
<dbReference type="Gene3D" id="3.40.50.1470">
    <property type="entry name" value="Peptidyl-tRNA hydrolase"/>
    <property type="match status" value="1"/>
</dbReference>
<dbReference type="HAMAP" id="MF_00083">
    <property type="entry name" value="Pept_tRNA_hydro_bact"/>
    <property type="match status" value="1"/>
</dbReference>
<dbReference type="InterPro" id="IPR001328">
    <property type="entry name" value="Pept_tRNA_hydro"/>
</dbReference>
<dbReference type="InterPro" id="IPR018171">
    <property type="entry name" value="Pept_tRNA_hydro_CS"/>
</dbReference>
<dbReference type="InterPro" id="IPR036416">
    <property type="entry name" value="Pept_tRNA_hydro_sf"/>
</dbReference>
<dbReference type="NCBIfam" id="TIGR00447">
    <property type="entry name" value="pth"/>
    <property type="match status" value="1"/>
</dbReference>
<dbReference type="PANTHER" id="PTHR17224">
    <property type="entry name" value="PEPTIDYL-TRNA HYDROLASE"/>
    <property type="match status" value="1"/>
</dbReference>
<dbReference type="PANTHER" id="PTHR17224:SF1">
    <property type="entry name" value="PEPTIDYL-TRNA HYDROLASE"/>
    <property type="match status" value="1"/>
</dbReference>
<dbReference type="Pfam" id="PF01195">
    <property type="entry name" value="Pept_tRNA_hydro"/>
    <property type="match status" value="1"/>
</dbReference>
<dbReference type="SUPFAM" id="SSF53178">
    <property type="entry name" value="Peptidyl-tRNA hydrolase-like"/>
    <property type="match status" value="1"/>
</dbReference>
<dbReference type="PROSITE" id="PS01195">
    <property type="entry name" value="PEPT_TRNA_HYDROL_1"/>
    <property type="match status" value="1"/>
</dbReference>
<dbReference type="PROSITE" id="PS01196">
    <property type="entry name" value="PEPT_TRNA_HYDROL_2"/>
    <property type="match status" value="1"/>
</dbReference>
<organism>
    <name type="scientific">Campylobacter jejuni subsp. jejuni serotype O:23/36 (strain 81-176)</name>
    <dbReference type="NCBI Taxonomy" id="354242"/>
    <lineage>
        <taxon>Bacteria</taxon>
        <taxon>Pseudomonadati</taxon>
        <taxon>Campylobacterota</taxon>
        <taxon>Epsilonproteobacteria</taxon>
        <taxon>Campylobacterales</taxon>
        <taxon>Campylobacteraceae</taxon>
        <taxon>Campylobacter</taxon>
    </lineage>
</organism>
<comment type="function">
    <text evidence="1">Hydrolyzes ribosome-free peptidyl-tRNAs (with 1 or more amino acids incorporated), which drop off the ribosome during protein synthesis, or as a result of ribosome stalling.</text>
</comment>
<comment type="function">
    <text evidence="1">Catalyzes the release of premature peptidyl moieties from peptidyl-tRNA molecules trapped in stalled 50S ribosomal subunits, and thus maintains levels of free tRNAs and 50S ribosomes.</text>
</comment>
<comment type="catalytic activity">
    <reaction evidence="1">
        <text>an N-acyl-L-alpha-aminoacyl-tRNA + H2O = an N-acyl-L-amino acid + a tRNA + H(+)</text>
        <dbReference type="Rhea" id="RHEA:54448"/>
        <dbReference type="Rhea" id="RHEA-COMP:10123"/>
        <dbReference type="Rhea" id="RHEA-COMP:13883"/>
        <dbReference type="ChEBI" id="CHEBI:15377"/>
        <dbReference type="ChEBI" id="CHEBI:15378"/>
        <dbReference type="ChEBI" id="CHEBI:59874"/>
        <dbReference type="ChEBI" id="CHEBI:78442"/>
        <dbReference type="ChEBI" id="CHEBI:138191"/>
        <dbReference type="EC" id="3.1.1.29"/>
    </reaction>
</comment>
<comment type="subunit">
    <text evidence="1">Monomer.</text>
</comment>
<comment type="subcellular location">
    <subcellularLocation>
        <location evidence="1">Cytoplasm</location>
    </subcellularLocation>
</comment>
<comment type="similarity">
    <text evidence="1">Belongs to the PTH family.</text>
</comment>
<keyword id="KW-0963">Cytoplasm</keyword>
<keyword id="KW-0378">Hydrolase</keyword>
<keyword id="KW-0694">RNA-binding</keyword>
<keyword id="KW-0820">tRNA-binding</keyword>
<feature type="chain" id="PRO_1000010580" description="Peptidyl-tRNA hydrolase">
    <location>
        <begin position="1"/>
        <end position="181"/>
    </location>
</feature>
<feature type="active site" description="Proton acceptor" evidence="1">
    <location>
        <position position="19"/>
    </location>
</feature>
<feature type="binding site" evidence="1">
    <location>
        <position position="14"/>
    </location>
    <ligand>
        <name>tRNA</name>
        <dbReference type="ChEBI" id="CHEBI:17843"/>
    </ligand>
</feature>
<feature type="binding site" evidence="1">
    <location>
        <position position="62"/>
    </location>
    <ligand>
        <name>tRNA</name>
        <dbReference type="ChEBI" id="CHEBI:17843"/>
    </ligand>
</feature>
<feature type="binding site" evidence="1">
    <location>
        <position position="64"/>
    </location>
    <ligand>
        <name>tRNA</name>
        <dbReference type="ChEBI" id="CHEBI:17843"/>
    </ligand>
</feature>
<feature type="binding site" evidence="1">
    <location>
        <position position="108"/>
    </location>
    <ligand>
        <name>tRNA</name>
        <dbReference type="ChEBI" id="CHEBI:17843"/>
    </ligand>
</feature>
<feature type="site" description="Discriminates between blocked and unblocked aminoacyl-tRNA" evidence="1">
    <location>
        <position position="9"/>
    </location>
</feature>
<feature type="site" description="Stabilizes the basic form of H active site to accept a proton" evidence="1">
    <location>
        <position position="87"/>
    </location>
</feature>
<reference key="1">
    <citation type="submission" date="2006-12" db="EMBL/GenBank/DDBJ databases">
        <authorList>
            <person name="Fouts D.E."/>
            <person name="Nelson K.E."/>
            <person name="Sebastian Y."/>
        </authorList>
    </citation>
    <scope>NUCLEOTIDE SEQUENCE [LARGE SCALE GENOMIC DNA]</scope>
    <source>
        <strain>81-176</strain>
    </source>
</reference>
<protein>
    <recommendedName>
        <fullName evidence="1">Peptidyl-tRNA hydrolase</fullName>
        <shortName evidence="1">Pth</shortName>
        <ecNumber evidence="1">3.1.1.29</ecNumber>
    </recommendedName>
</protein>